<accession>Q6ABY6</accession>
<dbReference type="EMBL" id="AE016822">
    <property type="protein sequence ID" value="AAT90106.1"/>
    <property type="molecule type" value="Genomic_DNA"/>
</dbReference>
<dbReference type="RefSeq" id="WP_011187085.1">
    <property type="nucleotide sequence ID" value="NC_006087.1"/>
</dbReference>
<dbReference type="SMR" id="Q6ABY6"/>
<dbReference type="STRING" id="281090.Lxx24980"/>
<dbReference type="KEGG" id="lxx:Lxx24980"/>
<dbReference type="eggNOG" id="COG0199">
    <property type="taxonomic scope" value="Bacteria"/>
</dbReference>
<dbReference type="HOGENOM" id="CLU_139869_0_1_11"/>
<dbReference type="Proteomes" id="UP000001306">
    <property type="component" value="Chromosome"/>
</dbReference>
<dbReference type="GO" id="GO:0015935">
    <property type="term" value="C:small ribosomal subunit"/>
    <property type="evidence" value="ECO:0007669"/>
    <property type="project" value="TreeGrafter"/>
</dbReference>
<dbReference type="GO" id="GO:0019843">
    <property type="term" value="F:rRNA binding"/>
    <property type="evidence" value="ECO:0007669"/>
    <property type="project" value="UniProtKB-UniRule"/>
</dbReference>
<dbReference type="GO" id="GO:0003735">
    <property type="term" value="F:structural constituent of ribosome"/>
    <property type="evidence" value="ECO:0007669"/>
    <property type="project" value="InterPro"/>
</dbReference>
<dbReference type="GO" id="GO:0006412">
    <property type="term" value="P:translation"/>
    <property type="evidence" value="ECO:0007669"/>
    <property type="project" value="UniProtKB-UniRule"/>
</dbReference>
<dbReference type="FunFam" id="1.10.287.1480:FF:000001">
    <property type="entry name" value="30S ribosomal protein S14"/>
    <property type="match status" value="1"/>
</dbReference>
<dbReference type="Gene3D" id="1.10.287.1480">
    <property type="match status" value="1"/>
</dbReference>
<dbReference type="HAMAP" id="MF_00537">
    <property type="entry name" value="Ribosomal_uS14_1"/>
    <property type="match status" value="1"/>
</dbReference>
<dbReference type="InterPro" id="IPR001209">
    <property type="entry name" value="Ribosomal_uS14"/>
</dbReference>
<dbReference type="InterPro" id="IPR023036">
    <property type="entry name" value="Ribosomal_uS14_bac/plastid"/>
</dbReference>
<dbReference type="NCBIfam" id="NF006477">
    <property type="entry name" value="PRK08881.1"/>
    <property type="match status" value="1"/>
</dbReference>
<dbReference type="PANTHER" id="PTHR19836">
    <property type="entry name" value="30S RIBOSOMAL PROTEIN S14"/>
    <property type="match status" value="1"/>
</dbReference>
<dbReference type="PANTHER" id="PTHR19836:SF23">
    <property type="entry name" value="SMALL RIBOSOMAL SUBUNIT PROTEIN US14A"/>
    <property type="match status" value="1"/>
</dbReference>
<dbReference type="Pfam" id="PF00253">
    <property type="entry name" value="Ribosomal_S14"/>
    <property type="match status" value="1"/>
</dbReference>
<dbReference type="SUPFAM" id="SSF57716">
    <property type="entry name" value="Glucocorticoid receptor-like (DNA-binding domain)"/>
    <property type="match status" value="1"/>
</dbReference>
<evidence type="ECO:0000255" key="1">
    <source>
        <dbReference type="HAMAP-Rule" id="MF_00537"/>
    </source>
</evidence>
<evidence type="ECO:0000305" key="2"/>
<proteinExistence type="inferred from homology"/>
<sequence>MAKKSKIAKNEQRKVVVERYAAKRAELKKALVDPNGTDESREAARLGLQKLPRDASPIRVRNRDAVDGRPRGNLSKFGISRVRFRDMAHRGELPGITKSSW</sequence>
<reference key="1">
    <citation type="journal article" date="2004" name="Mol. Plant Microbe Interact.">
        <title>The genome sequence of the Gram-positive sugarcane pathogen Leifsonia xyli subsp. xyli.</title>
        <authorList>
            <person name="Monteiro-Vitorello C.B."/>
            <person name="Camargo L.E.A."/>
            <person name="Van Sluys M.A."/>
            <person name="Kitajima J.P."/>
            <person name="Truffi D."/>
            <person name="do Amaral A.M."/>
            <person name="Harakava R."/>
            <person name="de Oliveira J.C.F."/>
            <person name="Wood D."/>
            <person name="de Oliveira M.C."/>
            <person name="Miyaki C.Y."/>
            <person name="Takita M.A."/>
            <person name="da Silva A.C.R."/>
            <person name="Furlan L.R."/>
            <person name="Carraro D.M."/>
            <person name="Camarotte G."/>
            <person name="Almeida N.F. Jr."/>
            <person name="Carrer H."/>
            <person name="Coutinho L.L."/>
            <person name="El-Dorry H.A."/>
            <person name="Ferro M.I.T."/>
            <person name="Gagliardi P.R."/>
            <person name="Giglioti E."/>
            <person name="Goldman M.H.S."/>
            <person name="Goldman G.H."/>
            <person name="Kimura E.T."/>
            <person name="Ferro E.S."/>
            <person name="Kuramae E.E."/>
            <person name="Lemos E.G.M."/>
            <person name="Lemos M.V.F."/>
            <person name="Mauro S.M.Z."/>
            <person name="Machado M.A."/>
            <person name="Marino C.L."/>
            <person name="Menck C.F."/>
            <person name="Nunes L.R."/>
            <person name="Oliveira R.C."/>
            <person name="Pereira G.G."/>
            <person name="Siqueira W."/>
            <person name="de Souza A.A."/>
            <person name="Tsai S.M."/>
            <person name="Zanca A.S."/>
            <person name="Simpson A.J.G."/>
            <person name="Brumbley S.M."/>
            <person name="Setubal J.C."/>
        </authorList>
    </citation>
    <scope>NUCLEOTIDE SEQUENCE [LARGE SCALE GENOMIC DNA]</scope>
    <source>
        <strain>CTCB07</strain>
    </source>
</reference>
<gene>
    <name evidence="1" type="primary">rpsN</name>
    <name type="ordered locus">Lxx24980</name>
</gene>
<name>RS14_LEIXX</name>
<comment type="function">
    <text evidence="1">Binds 16S rRNA, required for the assembly of 30S particles and may also be responsible for determining the conformation of the 16S rRNA at the A site.</text>
</comment>
<comment type="subunit">
    <text evidence="1">Part of the 30S ribosomal subunit. Contacts proteins S3 and S10.</text>
</comment>
<comment type="similarity">
    <text evidence="1">Belongs to the universal ribosomal protein uS14 family.</text>
</comment>
<feature type="chain" id="PRO_0000232459" description="Small ribosomal subunit protein uS14">
    <location>
        <begin position="1"/>
        <end position="101"/>
    </location>
</feature>
<protein>
    <recommendedName>
        <fullName evidence="1">Small ribosomal subunit protein uS14</fullName>
    </recommendedName>
    <alternativeName>
        <fullName evidence="2">30S ribosomal protein S14</fullName>
    </alternativeName>
</protein>
<keyword id="KW-1185">Reference proteome</keyword>
<keyword id="KW-0687">Ribonucleoprotein</keyword>
<keyword id="KW-0689">Ribosomal protein</keyword>
<keyword id="KW-0694">RNA-binding</keyword>
<keyword id="KW-0699">rRNA-binding</keyword>
<organism>
    <name type="scientific">Leifsonia xyli subsp. xyli (strain CTCB07)</name>
    <dbReference type="NCBI Taxonomy" id="281090"/>
    <lineage>
        <taxon>Bacteria</taxon>
        <taxon>Bacillati</taxon>
        <taxon>Actinomycetota</taxon>
        <taxon>Actinomycetes</taxon>
        <taxon>Micrococcales</taxon>
        <taxon>Microbacteriaceae</taxon>
        <taxon>Leifsonia</taxon>
    </lineage>
</organism>